<name>DEOB_HELAH</name>
<protein>
    <recommendedName>
        <fullName evidence="1">Phosphopentomutase</fullName>
        <ecNumber evidence="1">5.4.2.7</ecNumber>
    </recommendedName>
    <alternativeName>
        <fullName evidence="1">Phosphodeoxyribomutase</fullName>
    </alternativeName>
</protein>
<sequence>MQKRVVVLLLDSFGIGASEDAKDFGDLGANTLGNIAKACFNNLADSNDRNGALKLPNLESLGLGLSALKATNELPLGFDSHPNLIGAYAYAQELSSAKDTISGHWEMMGAPILFEWGYFKDKNNSFPKEILDEIMHKTKIKGYLGNCHASGTEIIKDLGEKHLETLYPIFYTSADSVFQIAVHEEKFGLDKLYALCEEVFEILEPLKIARVIARSFIGTNKDNFKRTSNRKDYAIKPHKKLLFETFIEEKQGEVISIGKIADIYAHVGITQKFKAGSLMELCDVTLEQVKNAQNNSLIFTNFVHFDSDYGHRRDVIGYANALEYFDAYLKEILESLRENDLLILCADHGCDPSFKGTDHTREYIPVLMYHKDLQPTFLGRSETFADIGQSIAHFLGLSPLDYGKNLLNFKGQP</sequence>
<gene>
    <name evidence="1" type="primary">deoB</name>
    <name type="ordered locus">Hac_0399</name>
</gene>
<reference key="1">
    <citation type="journal article" date="2006" name="PLoS Genet.">
        <title>Who ate whom? Adaptive Helicobacter genomic changes that accompanied a host jump from early humans to large felines.</title>
        <authorList>
            <person name="Eppinger M."/>
            <person name="Baar C."/>
            <person name="Linz B."/>
            <person name="Raddatz G."/>
            <person name="Lanz C."/>
            <person name="Keller H."/>
            <person name="Morelli G."/>
            <person name="Gressmann H."/>
            <person name="Achtman M."/>
            <person name="Schuster S.C."/>
        </authorList>
    </citation>
    <scope>NUCLEOTIDE SEQUENCE [LARGE SCALE GENOMIC DNA]</scope>
    <source>
        <strain>Sheeba</strain>
    </source>
</reference>
<evidence type="ECO:0000255" key="1">
    <source>
        <dbReference type="HAMAP-Rule" id="MF_00740"/>
    </source>
</evidence>
<proteinExistence type="inferred from homology"/>
<organism>
    <name type="scientific">Helicobacter acinonychis (strain Sheeba)</name>
    <dbReference type="NCBI Taxonomy" id="382638"/>
    <lineage>
        <taxon>Bacteria</taxon>
        <taxon>Pseudomonadati</taxon>
        <taxon>Campylobacterota</taxon>
        <taxon>Epsilonproteobacteria</taxon>
        <taxon>Campylobacterales</taxon>
        <taxon>Helicobacteraceae</taxon>
        <taxon>Helicobacter</taxon>
    </lineage>
</organism>
<accession>Q17YP1</accession>
<feature type="chain" id="PRO_1000046387" description="Phosphopentomutase">
    <location>
        <begin position="1"/>
        <end position="413"/>
    </location>
</feature>
<feature type="binding site" evidence="1">
    <location>
        <position position="11"/>
    </location>
    <ligand>
        <name>Mn(2+)</name>
        <dbReference type="ChEBI" id="CHEBI:29035"/>
        <label>1</label>
    </ligand>
</feature>
<feature type="binding site" evidence="1">
    <location>
        <position position="306"/>
    </location>
    <ligand>
        <name>Mn(2+)</name>
        <dbReference type="ChEBI" id="CHEBI:29035"/>
        <label>2</label>
    </ligand>
</feature>
<feature type="binding site" evidence="1">
    <location>
        <position position="311"/>
    </location>
    <ligand>
        <name>Mn(2+)</name>
        <dbReference type="ChEBI" id="CHEBI:29035"/>
        <label>2</label>
    </ligand>
</feature>
<feature type="binding site" evidence="1">
    <location>
        <position position="347"/>
    </location>
    <ligand>
        <name>Mn(2+)</name>
        <dbReference type="ChEBI" id="CHEBI:29035"/>
        <label>1</label>
    </ligand>
</feature>
<feature type="binding site" evidence="1">
    <location>
        <position position="348"/>
    </location>
    <ligand>
        <name>Mn(2+)</name>
        <dbReference type="ChEBI" id="CHEBI:29035"/>
        <label>1</label>
    </ligand>
</feature>
<feature type="binding site" evidence="1">
    <location>
        <position position="359"/>
    </location>
    <ligand>
        <name>Mn(2+)</name>
        <dbReference type="ChEBI" id="CHEBI:29035"/>
        <label>2</label>
    </ligand>
</feature>
<dbReference type="EC" id="5.4.2.7" evidence="1"/>
<dbReference type="EMBL" id="AM260522">
    <property type="protein sequence ID" value="CAJ99235.1"/>
    <property type="molecule type" value="Genomic_DNA"/>
</dbReference>
<dbReference type="RefSeq" id="WP_011577349.1">
    <property type="nucleotide sequence ID" value="NC_008229.1"/>
</dbReference>
<dbReference type="SMR" id="Q17YP1"/>
<dbReference type="STRING" id="382638.Hac_0399"/>
<dbReference type="GeneID" id="31757906"/>
<dbReference type="KEGG" id="hac:Hac_0399"/>
<dbReference type="eggNOG" id="COG1015">
    <property type="taxonomic scope" value="Bacteria"/>
</dbReference>
<dbReference type="HOGENOM" id="CLU_053861_0_0_7"/>
<dbReference type="OrthoDB" id="9769930at2"/>
<dbReference type="BioCyc" id="HACI382638:HAC_RS01810-MONOMER"/>
<dbReference type="UniPathway" id="UPA00002">
    <property type="reaction ID" value="UER00467"/>
</dbReference>
<dbReference type="Proteomes" id="UP000000775">
    <property type="component" value="Chromosome"/>
</dbReference>
<dbReference type="GO" id="GO:0005829">
    <property type="term" value="C:cytosol"/>
    <property type="evidence" value="ECO:0007669"/>
    <property type="project" value="TreeGrafter"/>
</dbReference>
<dbReference type="GO" id="GO:0000287">
    <property type="term" value="F:magnesium ion binding"/>
    <property type="evidence" value="ECO:0007669"/>
    <property type="project" value="InterPro"/>
</dbReference>
<dbReference type="GO" id="GO:0030145">
    <property type="term" value="F:manganese ion binding"/>
    <property type="evidence" value="ECO:0007669"/>
    <property type="project" value="UniProtKB-UniRule"/>
</dbReference>
<dbReference type="GO" id="GO:0008973">
    <property type="term" value="F:phosphopentomutase activity"/>
    <property type="evidence" value="ECO:0007669"/>
    <property type="project" value="UniProtKB-UniRule"/>
</dbReference>
<dbReference type="GO" id="GO:0006018">
    <property type="term" value="P:2-deoxyribose 1-phosphate catabolic process"/>
    <property type="evidence" value="ECO:0007669"/>
    <property type="project" value="UniProtKB-UniRule"/>
</dbReference>
<dbReference type="GO" id="GO:0006015">
    <property type="term" value="P:5-phosphoribose 1-diphosphate biosynthetic process"/>
    <property type="evidence" value="ECO:0007669"/>
    <property type="project" value="UniProtKB-UniPathway"/>
</dbReference>
<dbReference type="GO" id="GO:0043094">
    <property type="term" value="P:metabolic compound salvage"/>
    <property type="evidence" value="ECO:0007669"/>
    <property type="project" value="InterPro"/>
</dbReference>
<dbReference type="GO" id="GO:0009117">
    <property type="term" value="P:nucleotide metabolic process"/>
    <property type="evidence" value="ECO:0007669"/>
    <property type="project" value="InterPro"/>
</dbReference>
<dbReference type="CDD" id="cd16009">
    <property type="entry name" value="PPM"/>
    <property type="match status" value="1"/>
</dbReference>
<dbReference type="FunFam" id="3.30.70.1250:FF:000001">
    <property type="entry name" value="Phosphopentomutase"/>
    <property type="match status" value="1"/>
</dbReference>
<dbReference type="Gene3D" id="3.40.720.10">
    <property type="entry name" value="Alkaline Phosphatase, subunit A"/>
    <property type="match status" value="1"/>
</dbReference>
<dbReference type="Gene3D" id="3.30.70.1250">
    <property type="entry name" value="Phosphopentomutase"/>
    <property type="match status" value="1"/>
</dbReference>
<dbReference type="HAMAP" id="MF_00740">
    <property type="entry name" value="Phosphopentomut"/>
    <property type="match status" value="1"/>
</dbReference>
<dbReference type="InterPro" id="IPR017850">
    <property type="entry name" value="Alkaline_phosphatase_core_sf"/>
</dbReference>
<dbReference type="InterPro" id="IPR010045">
    <property type="entry name" value="DeoB"/>
</dbReference>
<dbReference type="InterPro" id="IPR006124">
    <property type="entry name" value="Metalloenzyme"/>
</dbReference>
<dbReference type="InterPro" id="IPR024052">
    <property type="entry name" value="Phosphopentomutase_DeoB_cap_sf"/>
</dbReference>
<dbReference type="NCBIfam" id="TIGR01696">
    <property type="entry name" value="deoB"/>
    <property type="match status" value="1"/>
</dbReference>
<dbReference type="NCBIfam" id="NF003766">
    <property type="entry name" value="PRK05362.1"/>
    <property type="match status" value="1"/>
</dbReference>
<dbReference type="PANTHER" id="PTHR21110">
    <property type="entry name" value="PHOSPHOPENTOMUTASE"/>
    <property type="match status" value="1"/>
</dbReference>
<dbReference type="PANTHER" id="PTHR21110:SF0">
    <property type="entry name" value="PHOSPHOPENTOMUTASE"/>
    <property type="match status" value="1"/>
</dbReference>
<dbReference type="Pfam" id="PF01676">
    <property type="entry name" value="Metalloenzyme"/>
    <property type="match status" value="1"/>
</dbReference>
<dbReference type="PIRSF" id="PIRSF001491">
    <property type="entry name" value="Ppentomutase"/>
    <property type="match status" value="1"/>
</dbReference>
<dbReference type="SUPFAM" id="SSF53649">
    <property type="entry name" value="Alkaline phosphatase-like"/>
    <property type="match status" value="1"/>
</dbReference>
<dbReference type="SUPFAM" id="SSF143856">
    <property type="entry name" value="DeoB insert domain-like"/>
    <property type="match status" value="1"/>
</dbReference>
<keyword id="KW-0963">Cytoplasm</keyword>
<keyword id="KW-0413">Isomerase</keyword>
<keyword id="KW-0464">Manganese</keyword>
<keyword id="KW-0479">Metal-binding</keyword>
<comment type="function">
    <text evidence="1">Isomerase that catalyzes the conversion of deoxy-ribose 1-phosphate (dRib-1-P) and ribose 1-phosphate (Rib-1-P) to deoxy-ribose 5-phosphate (dRib-5-P) and ribose 5-phosphate (Rib-5-P), respectively.</text>
</comment>
<comment type="catalytic activity">
    <reaction evidence="1">
        <text>2-deoxy-alpha-D-ribose 1-phosphate = 2-deoxy-D-ribose 5-phosphate</text>
        <dbReference type="Rhea" id="RHEA:27658"/>
        <dbReference type="ChEBI" id="CHEBI:57259"/>
        <dbReference type="ChEBI" id="CHEBI:62877"/>
        <dbReference type="EC" id="5.4.2.7"/>
    </reaction>
</comment>
<comment type="catalytic activity">
    <reaction evidence="1">
        <text>alpha-D-ribose 1-phosphate = D-ribose 5-phosphate</text>
        <dbReference type="Rhea" id="RHEA:18793"/>
        <dbReference type="ChEBI" id="CHEBI:57720"/>
        <dbReference type="ChEBI" id="CHEBI:78346"/>
        <dbReference type="EC" id="5.4.2.7"/>
    </reaction>
</comment>
<comment type="cofactor">
    <cofactor evidence="1">
        <name>Mn(2+)</name>
        <dbReference type="ChEBI" id="CHEBI:29035"/>
    </cofactor>
    <text evidence="1">Binds 2 manganese ions.</text>
</comment>
<comment type="pathway">
    <text evidence="1">Carbohydrate degradation; 2-deoxy-D-ribose 1-phosphate degradation; D-glyceraldehyde 3-phosphate and acetaldehyde from 2-deoxy-alpha-D-ribose 1-phosphate: step 1/2.</text>
</comment>
<comment type="subcellular location">
    <subcellularLocation>
        <location evidence="1">Cytoplasm</location>
    </subcellularLocation>
</comment>
<comment type="similarity">
    <text evidence="1">Belongs to the phosphopentomutase family.</text>
</comment>